<gene>
    <name evidence="1" type="primary">rplX</name>
    <name type="ordered locus">TTE2281</name>
</gene>
<evidence type="ECO:0000255" key="1">
    <source>
        <dbReference type="HAMAP-Rule" id="MF_01326"/>
    </source>
</evidence>
<evidence type="ECO:0000305" key="2"/>
<feature type="chain" id="PRO_0000130743" description="Large ribosomal subunit protein uL24">
    <location>
        <begin position="1"/>
        <end position="107"/>
    </location>
</feature>
<reference key="1">
    <citation type="journal article" date="2002" name="Genome Res.">
        <title>A complete sequence of the T. tengcongensis genome.</title>
        <authorList>
            <person name="Bao Q."/>
            <person name="Tian Y."/>
            <person name="Li W."/>
            <person name="Xu Z."/>
            <person name="Xuan Z."/>
            <person name="Hu S."/>
            <person name="Dong W."/>
            <person name="Yang J."/>
            <person name="Chen Y."/>
            <person name="Xue Y."/>
            <person name="Xu Y."/>
            <person name="Lai X."/>
            <person name="Huang L."/>
            <person name="Dong X."/>
            <person name="Ma Y."/>
            <person name="Ling L."/>
            <person name="Tan H."/>
            <person name="Chen R."/>
            <person name="Wang J."/>
            <person name="Yu J."/>
            <person name="Yang H."/>
        </authorList>
    </citation>
    <scope>NUCLEOTIDE SEQUENCE [LARGE SCALE GENOMIC DNA]</scope>
    <source>
        <strain>DSM 15242 / JCM 11007 / NBRC 100824 / MB4</strain>
    </source>
</reference>
<name>RL24_CALS4</name>
<dbReference type="EMBL" id="AE008691">
    <property type="protein sequence ID" value="AAM25424.1"/>
    <property type="molecule type" value="Genomic_DNA"/>
</dbReference>
<dbReference type="RefSeq" id="WP_011026327.1">
    <property type="nucleotide sequence ID" value="NC_003869.1"/>
</dbReference>
<dbReference type="SMR" id="Q8R7W5"/>
<dbReference type="STRING" id="273068.TTE2281"/>
<dbReference type="KEGG" id="tte:TTE2281"/>
<dbReference type="eggNOG" id="COG0198">
    <property type="taxonomic scope" value="Bacteria"/>
</dbReference>
<dbReference type="HOGENOM" id="CLU_093315_2_3_9"/>
<dbReference type="OrthoDB" id="9807419at2"/>
<dbReference type="Proteomes" id="UP000000555">
    <property type="component" value="Chromosome"/>
</dbReference>
<dbReference type="GO" id="GO:1990904">
    <property type="term" value="C:ribonucleoprotein complex"/>
    <property type="evidence" value="ECO:0007669"/>
    <property type="project" value="UniProtKB-KW"/>
</dbReference>
<dbReference type="GO" id="GO:0005840">
    <property type="term" value="C:ribosome"/>
    <property type="evidence" value="ECO:0007669"/>
    <property type="project" value="UniProtKB-KW"/>
</dbReference>
<dbReference type="GO" id="GO:0019843">
    <property type="term" value="F:rRNA binding"/>
    <property type="evidence" value="ECO:0007669"/>
    <property type="project" value="UniProtKB-UniRule"/>
</dbReference>
<dbReference type="GO" id="GO:0003735">
    <property type="term" value="F:structural constituent of ribosome"/>
    <property type="evidence" value="ECO:0007669"/>
    <property type="project" value="InterPro"/>
</dbReference>
<dbReference type="GO" id="GO:0006412">
    <property type="term" value="P:translation"/>
    <property type="evidence" value="ECO:0007669"/>
    <property type="project" value="UniProtKB-UniRule"/>
</dbReference>
<dbReference type="CDD" id="cd06089">
    <property type="entry name" value="KOW_RPL26"/>
    <property type="match status" value="1"/>
</dbReference>
<dbReference type="FunFam" id="2.30.30.30:FF:000004">
    <property type="entry name" value="50S ribosomal protein L24"/>
    <property type="match status" value="1"/>
</dbReference>
<dbReference type="Gene3D" id="2.30.30.30">
    <property type="match status" value="1"/>
</dbReference>
<dbReference type="HAMAP" id="MF_01326_B">
    <property type="entry name" value="Ribosomal_uL24_B"/>
    <property type="match status" value="1"/>
</dbReference>
<dbReference type="InterPro" id="IPR005824">
    <property type="entry name" value="KOW"/>
</dbReference>
<dbReference type="InterPro" id="IPR014722">
    <property type="entry name" value="Rib_uL2_dom2"/>
</dbReference>
<dbReference type="InterPro" id="IPR003256">
    <property type="entry name" value="Ribosomal_uL24"/>
</dbReference>
<dbReference type="InterPro" id="IPR005825">
    <property type="entry name" value="Ribosomal_uL24_CS"/>
</dbReference>
<dbReference type="InterPro" id="IPR041988">
    <property type="entry name" value="Ribosomal_uL24_KOW"/>
</dbReference>
<dbReference type="InterPro" id="IPR008991">
    <property type="entry name" value="Translation_prot_SH3-like_sf"/>
</dbReference>
<dbReference type="NCBIfam" id="TIGR01079">
    <property type="entry name" value="rplX_bact"/>
    <property type="match status" value="1"/>
</dbReference>
<dbReference type="PANTHER" id="PTHR12903">
    <property type="entry name" value="MITOCHONDRIAL RIBOSOMAL PROTEIN L24"/>
    <property type="match status" value="1"/>
</dbReference>
<dbReference type="Pfam" id="PF00467">
    <property type="entry name" value="KOW"/>
    <property type="match status" value="1"/>
</dbReference>
<dbReference type="Pfam" id="PF17136">
    <property type="entry name" value="ribosomal_L24"/>
    <property type="match status" value="1"/>
</dbReference>
<dbReference type="SMART" id="SM00739">
    <property type="entry name" value="KOW"/>
    <property type="match status" value="1"/>
</dbReference>
<dbReference type="SUPFAM" id="SSF50104">
    <property type="entry name" value="Translation proteins SH3-like domain"/>
    <property type="match status" value="1"/>
</dbReference>
<dbReference type="PROSITE" id="PS01108">
    <property type="entry name" value="RIBOSOMAL_L24"/>
    <property type="match status" value="1"/>
</dbReference>
<organism>
    <name type="scientific">Caldanaerobacter subterraneus subsp. tengcongensis (strain DSM 15242 / JCM 11007 / NBRC 100824 / MB4)</name>
    <name type="common">Thermoanaerobacter tengcongensis</name>
    <dbReference type="NCBI Taxonomy" id="273068"/>
    <lineage>
        <taxon>Bacteria</taxon>
        <taxon>Bacillati</taxon>
        <taxon>Bacillota</taxon>
        <taxon>Clostridia</taxon>
        <taxon>Thermoanaerobacterales</taxon>
        <taxon>Thermoanaerobacteraceae</taxon>
        <taxon>Caldanaerobacter</taxon>
    </lineage>
</organism>
<protein>
    <recommendedName>
        <fullName evidence="1">Large ribosomal subunit protein uL24</fullName>
    </recommendedName>
    <alternativeName>
        <fullName evidence="2">50S ribosomal protein L24</fullName>
    </alternativeName>
</protein>
<comment type="function">
    <text evidence="1">One of two assembly initiator proteins, it binds directly to the 5'-end of the 23S rRNA, where it nucleates assembly of the 50S subunit.</text>
</comment>
<comment type="function">
    <text evidence="1">One of the proteins that surrounds the polypeptide exit tunnel on the outside of the subunit.</text>
</comment>
<comment type="subunit">
    <text evidence="1">Part of the 50S ribosomal subunit.</text>
</comment>
<comment type="similarity">
    <text evidence="1">Belongs to the universal ribosomal protein uL24 family.</text>
</comment>
<keyword id="KW-1185">Reference proteome</keyword>
<keyword id="KW-0687">Ribonucleoprotein</keyword>
<keyword id="KW-0689">Ribosomal protein</keyword>
<keyword id="KW-0694">RNA-binding</keyword>
<keyword id="KW-0699">rRNA-binding</keyword>
<proteinExistence type="inferred from homology"/>
<sequence>MAQNKLHVKKGDMVVVISGKDKGKKGRVLQAFPKEGKVIVEGVNVVTKHRKATRPQKPGGIIHQEAPIHSSKVMLYCENCGRGVRYGIKILENGEKVRYCKRCNETL</sequence>
<accession>Q8R7W5</accession>